<accession>Q20X96</accession>
<protein>
    <recommendedName>
        <fullName evidence="1">ATP phosphoribosyltransferase</fullName>
        <shortName evidence="1">ATP-PRT</shortName>
        <shortName evidence="1">ATP-PRTase</shortName>
        <ecNumber evidence="1">2.4.2.17</ecNumber>
    </recommendedName>
</protein>
<comment type="function">
    <text evidence="1">Catalyzes the condensation of ATP and 5-phosphoribose 1-diphosphate to form N'-(5'-phosphoribosyl)-ATP (PR-ATP). Has a crucial role in the pathway because the rate of histidine biosynthesis seems to be controlled primarily by regulation of HisG enzymatic activity.</text>
</comment>
<comment type="catalytic activity">
    <reaction evidence="1">
        <text>1-(5-phospho-beta-D-ribosyl)-ATP + diphosphate = 5-phospho-alpha-D-ribose 1-diphosphate + ATP</text>
        <dbReference type="Rhea" id="RHEA:18473"/>
        <dbReference type="ChEBI" id="CHEBI:30616"/>
        <dbReference type="ChEBI" id="CHEBI:33019"/>
        <dbReference type="ChEBI" id="CHEBI:58017"/>
        <dbReference type="ChEBI" id="CHEBI:73183"/>
        <dbReference type="EC" id="2.4.2.17"/>
    </reaction>
</comment>
<comment type="cofactor">
    <cofactor evidence="1">
        <name>Mg(2+)</name>
        <dbReference type="ChEBI" id="CHEBI:18420"/>
    </cofactor>
</comment>
<comment type="activity regulation">
    <text evidence="1">Feedback inhibited by histidine.</text>
</comment>
<comment type="pathway">
    <text evidence="1">Amino-acid biosynthesis; L-histidine biosynthesis; L-histidine from 5-phospho-alpha-D-ribose 1-diphosphate: step 1/9.</text>
</comment>
<comment type="subcellular location">
    <subcellularLocation>
        <location evidence="1">Cytoplasm</location>
    </subcellularLocation>
</comment>
<comment type="similarity">
    <text evidence="1">Belongs to the ATP phosphoribosyltransferase family. Long subfamily.</text>
</comment>
<gene>
    <name evidence="1" type="primary">hisG</name>
    <name type="ordered locus">RPC_4718</name>
</gene>
<keyword id="KW-0028">Amino-acid biosynthesis</keyword>
<keyword id="KW-0067">ATP-binding</keyword>
<keyword id="KW-0963">Cytoplasm</keyword>
<keyword id="KW-0328">Glycosyltransferase</keyword>
<keyword id="KW-0368">Histidine biosynthesis</keyword>
<keyword id="KW-0460">Magnesium</keyword>
<keyword id="KW-0479">Metal-binding</keyword>
<keyword id="KW-0547">Nucleotide-binding</keyword>
<keyword id="KW-0808">Transferase</keyword>
<dbReference type="EC" id="2.4.2.17" evidence="1"/>
<dbReference type="EMBL" id="CP000301">
    <property type="protein sequence ID" value="ABD90240.1"/>
    <property type="molecule type" value="Genomic_DNA"/>
</dbReference>
<dbReference type="SMR" id="Q20X96"/>
<dbReference type="STRING" id="316056.RPC_4718"/>
<dbReference type="KEGG" id="rpc:RPC_4718"/>
<dbReference type="eggNOG" id="COG0040">
    <property type="taxonomic scope" value="Bacteria"/>
</dbReference>
<dbReference type="HOGENOM" id="CLU_038115_0_1_5"/>
<dbReference type="OrthoDB" id="9806435at2"/>
<dbReference type="UniPathway" id="UPA00031">
    <property type="reaction ID" value="UER00006"/>
</dbReference>
<dbReference type="GO" id="GO:0005737">
    <property type="term" value="C:cytoplasm"/>
    <property type="evidence" value="ECO:0007669"/>
    <property type="project" value="UniProtKB-SubCell"/>
</dbReference>
<dbReference type="GO" id="GO:0005524">
    <property type="term" value="F:ATP binding"/>
    <property type="evidence" value="ECO:0007669"/>
    <property type="project" value="UniProtKB-KW"/>
</dbReference>
<dbReference type="GO" id="GO:0003879">
    <property type="term" value="F:ATP phosphoribosyltransferase activity"/>
    <property type="evidence" value="ECO:0007669"/>
    <property type="project" value="UniProtKB-UniRule"/>
</dbReference>
<dbReference type="GO" id="GO:0000287">
    <property type="term" value="F:magnesium ion binding"/>
    <property type="evidence" value="ECO:0007669"/>
    <property type="project" value="UniProtKB-UniRule"/>
</dbReference>
<dbReference type="GO" id="GO:0000105">
    <property type="term" value="P:L-histidine biosynthetic process"/>
    <property type="evidence" value="ECO:0007669"/>
    <property type="project" value="UniProtKB-UniRule"/>
</dbReference>
<dbReference type="CDD" id="cd13593">
    <property type="entry name" value="PBP2_HisGL3"/>
    <property type="match status" value="1"/>
</dbReference>
<dbReference type="Gene3D" id="3.40.190.10">
    <property type="entry name" value="Periplasmic binding protein-like II"/>
    <property type="match status" value="2"/>
</dbReference>
<dbReference type="HAMAP" id="MF_00079">
    <property type="entry name" value="HisG_Long"/>
    <property type="match status" value="1"/>
</dbReference>
<dbReference type="InterPro" id="IPR020621">
    <property type="entry name" value="ATP-PRT_HisG_long"/>
</dbReference>
<dbReference type="InterPro" id="IPR013820">
    <property type="entry name" value="ATP_PRibTrfase_cat"/>
</dbReference>
<dbReference type="InterPro" id="IPR018198">
    <property type="entry name" value="ATP_PRibTrfase_CS"/>
</dbReference>
<dbReference type="InterPro" id="IPR001348">
    <property type="entry name" value="ATP_PRibTrfase_HisG"/>
</dbReference>
<dbReference type="NCBIfam" id="TIGR00070">
    <property type="entry name" value="hisG"/>
    <property type="match status" value="1"/>
</dbReference>
<dbReference type="PANTHER" id="PTHR21403:SF8">
    <property type="entry name" value="ATP PHOSPHORIBOSYLTRANSFERASE"/>
    <property type="match status" value="1"/>
</dbReference>
<dbReference type="PANTHER" id="PTHR21403">
    <property type="entry name" value="ATP PHOSPHORIBOSYLTRANSFERASE ATP-PRTASE"/>
    <property type="match status" value="1"/>
</dbReference>
<dbReference type="Pfam" id="PF01634">
    <property type="entry name" value="HisG"/>
    <property type="match status" value="1"/>
</dbReference>
<dbReference type="SUPFAM" id="SSF53850">
    <property type="entry name" value="Periplasmic binding protein-like II"/>
    <property type="match status" value="1"/>
</dbReference>
<dbReference type="PROSITE" id="PS01316">
    <property type="entry name" value="ATP_P_PHORIBOSYLTR"/>
    <property type="match status" value="1"/>
</dbReference>
<proteinExistence type="inferred from homology"/>
<reference key="1">
    <citation type="submission" date="2006-03" db="EMBL/GenBank/DDBJ databases">
        <title>Complete sequence of Rhodopseudomonas palustris BisB18.</title>
        <authorList>
            <consortium name="US DOE Joint Genome Institute"/>
            <person name="Copeland A."/>
            <person name="Lucas S."/>
            <person name="Lapidus A."/>
            <person name="Barry K."/>
            <person name="Detter J.C."/>
            <person name="Glavina del Rio T."/>
            <person name="Hammon N."/>
            <person name="Israni S."/>
            <person name="Dalin E."/>
            <person name="Tice H."/>
            <person name="Pitluck S."/>
            <person name="Chain P."/>
            <person name="Malfatti S."/>
            <person name="Shin M."/>
            <person name="Vergez L."/>
            <person name="Schmutz J."/>
            <person name="Larimer F."/>
            <person name="Land M."/>
            <person name="Hauser L."/>
            <person name="Pelletier D.A."/>
            <person name="Kyrpides N."/>
            <person name="Anderson I."/>
            <person name="Oda Y."/>
            <person name="Harwood C.S."/>
            <person name="Richardson P."/>
        </authorList>
    </citation>
    <scope>NUCLEOTIDE SEQUENCE [LARGE SCALE GENOMIC DNA]</scope>
    <source>
        <strain>BisB18</strain>
    </source>
</reference>
<name>HIS1_RHOPB</name>
<sequence length="325" mass="34648">MTTPFVLAVPSKGRLQENAEAFFARAGLTLSKLGGARDYRGTIAGLDNVEIAYLSASEIAAQLARGTVHLGITGEDLIRESIADADKKVALIEGLGFGGANVVVAVPQAWIDVRTMADLDDVTTGFRAQHNRRMRVATKYINLTRNFFAAHGVVDYRIVESAGATEGAPAVGTAEMIVDITSSGATLVANGLKVLDDGVILRSQANLVASRAADWSADALETARVILDRIAARARANKYKEVRTRFAGCDASLLTEAHNRFGVVSPFGGPTSSGMITLHCPPAQLYALGSFLRDHGADTVSIASLDYVLDRENPLFAKLESFLRQ</sequence>
<organism>
    <name type="scientific">Rhodopseudomonas palustris (strain BisB18)</name>
    <dbReference type="NCBI Taxonomy" id="316056"/>
    <lineage>
        <taxon>Bacteria</taxon>
        <taxon>Pseudomonadati</taxon>
        <taxon>Pseudomonadota</taxon>
        <taxon>Alphaproteobacteria</taxon>
        <taxon>Hyphomicrobiales</taxon>
        <taxon>Nitrobacteraceae</taxon>
        <taxon>Rhodopseudomonas</taxon>
    </lineage>
</organism>
<feature type="chain" id="PRO_1000004492" description="ATP phosphoribosyltransferase">
    <location>
        <begin position="1"/>
        <end position="325"/>
    </location>
</feature>
<evidence type="ECO:0000255" key="1">
    <source>
        <dbReference type="HAMAP-Rule" id="MF_00079"/>
    </source>
</evidence>